<proteinExistence type="inferred from homology"/>
<dbReference type="EMBL" id="L47617">
    <property type="protein sequence ID" value="AAA78255.2"/>
    <property type="molecule type" value="Genomic_DNA"/>
</dbReference>
<dbReference type="RefSeq" id="WP_005451049.1">
    <property type="nucleotide sequence ID" value="NZ_AP031614.1"/>
</dbReference>
<dbReference type="SMR" id="P52625"/>
<dbReference type="STRING" id="669.AL538_09680"/>
<dbReference type="PATRIC" id="fig|669.45.peg.1062"/>
<dbReference type="OrthoDB" id="9787841at2"/>
<dbReference type="GO" id="GO:0043190">
    <property type="term" value="C:ATP-binding cassette (ABC) transporter complex"/>
    <property type="evidence" value="ECO:0007669"/>
    <property type="project" value="InterPro"/>
</dbReference>
<dbReference type="GO" id="GO:0015184">
    <property type="term" value="F:L-cystine transmembrane transporter activity"/>
    <property type="evidence" value="ECO:0007669"/>
    <property type="project" value="TreeGrafter"/>
</dbReference>
<dbReference type="CDD" id="cd06261">
    <property type="entry name" value="TM_PBP2"/>
    <property type="match status" value="1"/>
</dbReference>
<dbReference type="FunFam" id="1.10.3720.10:FF:000009">
    <property type="entry name" value="Amino acid ABC transporter permease"/>
    <property type="match status" value="1"/>
</dbReference>
<dbReference type="Gene3D" id="1.10.3720.10">
    <property type="entry name" value="MetI-like"/>
    <property type="match status" value="1"/>
</dbReference>
<dbReference type="InterPro" id="IPR010065">
    <property type="entry name" value="AA_ABC_transptr_permease_3TM"/>
</dbReference>
<dbReference type="InterPro" id="IPR043429">
    <property type="entry name" value="ArtM/GltK/GlnP/TcyL/YhdX-like"/>
</dbReference>
<dbReference type="InterPro" id="IPR000515">
    <property type="entry name" value="MetI-like"/>
</dbReference>
<dbReference type="InterPro" id="IPR035906">
    <property type="entry name" value="MetI-like_sf"/>
</dbReference>
<dbReference type="NCBIfam" id="TIGR01726">
    <property type="entry name" value="HEQRo_perm_3TM"/>
    <property type="match status" value="1"/>
</dbReference>
<dbReference type="PANTHER" id="PTHR30614:SF0">
    <property type="entry name" value="L-CYSTINE TRANSPORT SYSTEM PERMEASE PROTEIN TCYL"/>
    <property type="match status" value="1"/>
</dbReference>
<dbReference type="PANTHER" id="PTHR30614">
    <property type="entry name" value="MEMBRANE COMPONENT OF AMINO ACID ABC TRANSPORTER"/>
    <property type="match status" value="1"/>
</dbReference>
<dbReference type="Pfam" id="PF00528">
    <property type="entry name" value="BPD_transp_1"/>
    <property type="match status" value="1"/>
</dbReference>
<dbReference type="SUPFAM" id="SSF161098">
    <property type="entry name" value="MetI-like"/>
    <property type="match status" value="1"/>
</dbReference>
<dbReference type="PROSITE" id="PS50928">
    <property type="entry name" value="ABC_TM1"/>
    <property type="match status" value="1"/>
</dbReference>
<comment type="function">
    <text>Probably part of a binding-protein-dependent transport system for an amino acid. Probably responsible for the translocation of the substrate across the membrane.</text>
</comment>
<comment type="subcellular location">
    <subcellularLocation>
        <location evidence="2">Cell inner membrane</location>
        <topology evidence="1">Multi-pass membrane protein</topology>
    </subcellularLocation>
</comment>
<comment type="similarity">
    <text evidence="2">Belongs to the binding-protein-dependent transport system permease family. HisMQ subfamily.</text>
</comment>
<accession>P52625</accession>
<feature type="chain" id="PRO_0000060172" description="Probable amino-acid ABC transporter permease protein PatM">
    <location>
        <begin position="1"/>
        <end position="223"/>
    </location>
</feature>
<feature type="transmembrane region" description="Helical" evidence="1">
    <location>
        <begin position="23"/>
        <end position="43"/>
    </location>
</feature>
<feature type="transmembrane region" description="Helical" evidence="1">
    <location>
        <begin position="59"/>
        <end position="78"/>
    </location>
</feature>
<feature type="transmembrane region" description="Helical" evidence="1">
    <location>
        <begin position="90"/>
        <end position="110"/>
    </location>
</feature>
<feature type="transmembrane region" description="Helical" evidence="1">
    <location>
        <begin position="156"/>
        <end position="176"/>
    </location>
</feature>
<feature type="transmembrane region" description="Helical" evidence="1">
    <location>
        <begin position="186"/>
        <end position="206"/>
    </location>
</feature>
<feature type="domain" description="ABC transmembrane type-1" evidence="1">
    <location>
        <begin position="19"/>
        <end position="210"/>
    </location>
</feature>
<sequence>MGFDFNYMLELLPILLKYLGTTMEMATWGLVFSLILSVILANIRVFKLPVLDQLSQLYISFFRGTPLLVQLFLLYYGLPQIFPFMVGIDAFSAAVIGLTLHFAAYMAESIRAAIIGIDRSQMEASLSVGMTTTQAMRRVILPQATRVALPSLMNYFIDMIKSTSLAFTLGVAEIMAKAQMEASSSFRFFEAFLAVALIYWGVVVILTRVQIWAEAKLNKAYVR</sequence>
<organism>
    <name type="scientific">Vibrio harveyi</name>
    <name type="common">Beneckea harveyi</name>
    <dbReference type="NCBI Taxonomy" id="669"/>
    <lineage>
        <taxon>Bacteria</taxon>
        <taxon>Pseudomonadati</taxon>
        <taxon>Pseudomonadota</taxon>
        <taxon>Gammaproteobacteria</taxon>
        <taxon>Vibrionales</taxon>
        <taxon>Vibrionaceae</taxon>
        <taxon>Vibrio</taxon>
    </lineage>
</organism>
<evidence type="ECO:0000255" key="1">
    <source>
        <dbReference type="PROSITE-ProRule" id="PRU00441"/>
    </source>
</evidence>
<evidence type="ECO:0000305" key="2"/>
<gene>
    <name type="primary">patM</name>
</gene>
<keyword id="KW-0029">Amino-acid transport</keyword>
<keyword id="KW-0997">Cell inner membrane</keyword>
<keyword id="KW-1003">Cell membrane</keyword>
<keyword id="KW-0472">Membrane</keyword>
<keyword id="KW-0812">Transmembrane</keyword>
<keyword id="KW-1133">Transmembrane helix</keyword>
<keyword id="KW-0813">Transport</keyword>
<protein>
    <recommendedName>
        <fullName>Probable amino-acid ABC transporter permease protein PatM</fullName>
    </recommendedName>
</protein>
<name>PATM_VIBHA</name>
<reference key="1">
    <citation type="submission" date="2001-08" db="EMBL/GenBank/DDBJ databases">
        <authorList>
            <person name="Berenstein D."/>
            <person name="Skovgaard O."/>
        </authorList>
    </citation>
    <scope>NUCLEOTIDE SEQUENCE [GENOMIC DNA]</scope>
    <source>
        <strain>ATCC 33843 / NCIMB 1871 / 392 / MAV</strain>
    </source>
</reference>